<sequence length="206" mass="23307">MLPPAIHFYLLPLACILMKSCLAFKNDATEILYSHVVKPVPAHPSSNSTLNQARNGGRHFSNTGLDRNTRVQVGCRELRSTKYISDGQCTSISPLKELVCAGECLPLPVLPNWIGGGYGTKYWSRRSSQEWRCVNDKTRTQRIQLQCQDGSTRTYKITVVTACKCKRYTRQHNESSHNFESMSPAKPVQHHRERKRASKSSKHSMS</sequence>
<gene>
    <name type="primary">SOSTDC1</name>
    <name type="synonym">USAG1</name>
    <name type="ORF">CDA019</name>
</gene>
<reference key="1">
    <citation type="journal article" date="2003" name="Dev. Biol.">
        <title>Identification of a secreted BMP antagonist, ectodin, integrating BMP, FGF, and SHH signals from the tooth enamel knot.</title>
        <authorList>
            <person name="Laurikkala J."/>
            <person name="Kassai Y."/>
            <person name="Pakkasjaervi L."/>
            <person name="Thesleff I."/>
            <person name="Itoh N."/>
        </authorList>
    </citation>
    <scope>NUCLEOTIDE SEQUENCE [MRNA] (ISOFORM 1)</scope>
</reference>
<reference key="2">
    <citation type="submission" date="2001-03" db="EMBL/GenBank/DDBJ databases">
        <title>A novel gene expressed in human pheochromocytoma.</title>
        <authorList>
            <person name="Liu F."/>
            <person name="Xu X.R."/>
            <person name="Qian B.Z."/>
            <person name="Xiao H."/>
            <person name="Chen Z."/>
            <person name="Han Z."/>
        </authorList>
    </citation>
    <scope>NUCLEOTIDE SEQUENCE [LARGE SCALE MRNA] (ISOFORM 1)</scope>
    <source>
        <tissue>Pheochromocytoma</tissue>
    </source>
</reference>
<reference key="3">
    <citation type="submission" date="2003-03" db="EMBL/GenBank/DDBJ databases">
        <title>A novel secreted WNT agonist is a requirement for epithelial-mesenchymal interactions.</title>
        <authorList>
            <person name="O'Shaughnessy R.F.L."/>
            <person name="Yeo W."/>
            <person name="Gautier J."/>
            <person name="Jahoda C.A.B."/>
            <person name="Christiano A.M."/>
        </authorList>
    </citation>
    <scope>NUCLEOTIDE SEQUENCE [MRNA] (ISOFORM 1)</scope>
</reference>
<reference key="4">
    <citation type="journal article" date="2004" name="Nat. Genet.">
        <title>Complete sequencing and characterization of 21,243 full-length human cDNAs.</title>
        <authorList>
            <person name="Ota T."/>
            <person name="Suzuki Y."/>
            <person name="Nishikawa T."/>
            <person name="Otsuki T."/>
            <person name="Sugiyama T."/>
            <person name="Irie R."/>
            <person name="Wakamatsu A."/>
            <person name="Hayashi K."/>
            <person name="Sato H."/>
            <person name="Nagai K."/>
            <person name="Kimura K."/>
            <person name="Makita H."/>
            <person name="Sekine M."/>
            <person name="Obayashi M."/>
            <person name="Nishi T."/>
            <person name="Shibahara T."/>
            <person name="Tanaka T."/>
            <person name="Ishii S."/>
            <person name="Yamamoto J."/>
            <person name="Saito K."/>
            <person name="Kawai Y."/>
            <person name="Isono Y."/>
            <person name="Nakamura Y."/>
            <person name="Nagahari K."/>
            <person name="Murakami K."/>
            <person name="Yasuda T."/>
            <person name="Iwayanagi T."/>
            <person name="Wagatsuma M."/>
            <person name="Shiratori A."/>
            <person name="Sudo H."/>
            <person name="Hosoiri T."/>
            <person name="Kaku Y."/>
            <person name="Kodaira H."/>
            <person name="Kondo H."/>
            <person name="Sugawara M."/>
            <person name="Takahashi M."/>
            <person name="Kanda K."/>
            <person name="Yokoi T."/>
            <person name="Furuya T."/>
            <person name="Kikkawa E."/>
            <person name="Omura Y."/>
            <person name="Abe K."/>
            <person name="Kamihara K."/>
            <person name="Katsuta N."/>
            <person name="Sato K."/>
            <person name="Tanikawa M."/>
            <person name="Yamazaki M."/>
            <person name="Ninomiya K."/>
            <person name="Ishibashi T."/>
            <person name="Yamashita H."/>
            <person name="Murakawa K."/>
            <person name="Fujimori K."/>
            <person name="Tanai H."/>
            <person name="Kimata M."/>
            <person name="Watanabe M."/>
            <person name="Hiraoka S."/>
            <person name="Chiba Y."/>
            <person name="Ishida S."/>
            <person name="Ono Y."/>
            <person name="Takiguchi S."/>
            <person name="Watanabe S."/>
            <person name="Yosida M."/>
            <person name="Hotuta T."/>
            <person name="Kusano J."/>
            <person name="Kanehori K."/>
            <person name="Takahashi-Fujii A."/>
            <person name="Hara H."/>
            <person name="Tanase T.-O."/>
            <person name="Nomura Y."/>
            <person name="Togiya S."/>
            <person name="Komai F."/>
            <person name="Hara R."/>
            <person name="Takeuchi K."/>
            <person name="Arita M."/>
            <person name="Imose N."/>
            <person name="Musashino K."/>
            <person name="Yuuki H."/>
            <person name="Oshima A."/>
            <person name="Sasaki N."/>
            <person name="Aotsuka S."/>
            <person name="Yoshikawa Y."/>
            <person name="Matsunawa H."/>
            <person name="Ichihara T."/>
            <person name="Shiohata N."/>
            <person name="Sano S."/>
            <person name="Moriya S."/>
            <person name="Momiyama H."/>
            <person name="Satoh N."/>
            <person name="Takami S."/>
            <person name="Terashima Y."/>
            <person name="Suzuki O."/>
            <person name="Nakagawa S."/>
            <person name="Senoh A."/>
            <person name="Mizoguchi H."/>
            <person name="Goto Y."/>
            <person name="Shimizu F."/>
            <person name="Wakebe H."/>
            <person name="Hishigaki H."/>
            <person name="Watanabe T."/>
            <person name="Sugiyama A."/>
            <person name="Takemoto M."/>
            <person name="Kawakami B."/>
            <person name="Yamazaki M."/>
            <person name="Watanabe K."/>
            <person name="Kumagai A."/>
            <person name="Itakura S."/>
            <person name="Fukuzumi Y."/>
            <person name="Fujimori Y."/>
            <person name="Komiyama M."/>
            <person name="Tashiro H."/>
            <person name="Tanigami A."/>
            <person name="Fujiwara T."/>
            <person name="Ono T."/>
            <person name="Yamada K."/>
            <person name="Fujii Y."/>
            <person name="Ozaki K."/>
            <person name="Hirao M."/>
            <person name="Ohmori Y."/>
            <person name="Kawabata A."/>
            <person name="Hikiji T."/>
            <person name="Kobatake N."/>
            <person name="Inagaki H."/>
            <person name="Ikema Y."/>
            <person name="Okamoto S."/>
            <person name="Okitani R."/>
            <person name="Kawakami T."/>
            <person name="Noguchi S."/>
            <person name="Itoh T."/>
            <person name="Shigeta K."/>
            <person name="Senba T."/>
            <person name="Matsumura K."/>
            <person name="Nakajima Y."/>
            <person name="Mizuno T."/>
            <person name="Morinaga M."/>
            <person name="Sasaki M."/>
            <person name="Togashi T."/>
            <person name="Oyama M."/>
            <person name="Hata H."/>
            <person name="Watanabe M."/>
            <person name="Komatsu T."/>
            <person name="Mizushima-Sugano J."/>
            <person name="Satoh T."/>
            <person name="Shirai Y."/>
            <person name="Takahashi Y."/>
            <person name="Nakagawa K."/>
            <person name="Okumura K."/>
            <person name="Nagase T."/>
            <person name="Nomura N."/>
            <person name="Kikuchi H."/>
            <person name="Masuho Y."/>
            <person name="Yamashita R."/>
            <person name="Nakai K."/>
            <person name="Yada T."/>
            <person name="Nakamura Y."/>
            <person name="Ohara O."/>
            <person name="Isogai T."/>
            <person name="Sugano S."/>
        </authorList>
    </citation>
    <scope>NUCLEOTIDE SEQUENCE [LARGE SCALE MRNA] (ISOFORM 2)</scope>
    <source>
        <tissue>Testis</tissue>
    </source>
</reference>
<reference key="5">
    <citation type="journal article" date="2003" name="Nature">
        <title>The DNA sequence of human chromosome 7.</title>
        <authorList>
            <person name="Hillier L.W."/>
            <person name="Fulton R.S."/>
            <person name="Fulton L.A."/>
            <person name="Graves T.A."/>
            <person name="Pepin K.H."/>
            <person name="Wagner-McPherson C."/>
            <person name="Layman D."/>
            <person name="Maas J."/>
            <person name="Jaeger S."/>
            <person name="Walker R."/>
            <person name="Wylie K."/>
            <person name="Sekhon M."/>
            <person name="Becker M.C."/>
            <person name="O'Laughlin M.D."/>
            <person name="Schaller M.E."/>
            <person name="Fewell G.A."/>
            <person name="Delehaunty K.D."/>
            <person name="Miner T.L."/>
            <person name="Nash W.E."/>
            <person name="Cordes M."/>
            <person name="Du H."/>
            <person name="Sun H."/>
            <person name="Edwards J."/>
            <person name="Bradshaw-Cordum H."/>
            <person name="Ali J."/>
            <person name="Andrews S."/>
            <person name="Isak A."/>
            <person name="Vanbrunt A."/>
            <person name="Nguyen C."/>
            <person name="Du F."/>
            <person name="Lamar B."/>
            <person name="Courtney L."/>
            <person name="Kalicki J."/>
            <person name="Ozersky P."/>
            <person name="Bielicki L."/>
            <person name="Scott K."/>
            <person name="Holmes A."/>
            <person name="Harkins R."/>
            <person name="Harris A."/>
            <person name="Strong C.M."/>
            <person name="Hou S."/>
            <person name="Tomlinson C."/>
            <person name="Dauphin-Kohlberg S."/>
            <person name="Kozlowicz-Reilly A."/>
            <person name="Leonard S."/>
            <person name="Rohlfing T."/>
            <person name="Rock S.M."/>
            <person name="Tin-Wollam A.-M."/>
            <person name="Abbott A."/>
            <person name="Minx P."/>
            <person name="Maupin R."/>
            <person name="Strowmatt C."/>
            <person name="Latreille P."/>
            <person name="Miller N."/>
            <person name="Johnson D."/>
            <person name="Murray J."/>
            <person name="Woessner J.P."/>
            <person name="Wendl M.C."/>
            <person name="Yang S.-P."/>
            <person name="Schultz B.R."/>
            <person name="Wallis J.W."/>
            <person name="Spieth J."/>
            <person name="Bieri T.A."/>
            <person name="Nelson J.O."/>
            <person name="Berkowicz N."/>
            <person name="Wohldmann P.E."/>
            <person name="Cook L.L."/>
            <person name="Hickenbotham M.T."/>
            <person name="Eldred J."/>
            <person name="Williams D."/>
            <person name="Bedell J.A."/>
            <person name="Mardis E.R."/>
            <person name="Clifton S.W."/>
            <person name="Chissoe S.L."/>
            <person name="Marra M.A."/>
            <person name="Raymond C."/>
            <person name="Haugen E."/>
            <person name="Gillett W."/>
            <person name="Zhou Y."/>
            <person name="James R."/>
            <person name="Phelps K."/>
            <person name="Iadanoto S."/>
            <person name="Bubb K."/>
            <person name="Simms E."/>
            <person name="Levy R."/>
            <person name="Clendenning J."/>
            <person name="Kaul R."/>
            <person name="Kent W.J."/>
            <person name="Furey T.S."/>
            <person name="Baertsch R.A."/>
            <person name="Brent M.R."/>
            <person name="Keibler E."/>
            <person name="Flicek P."/>
            <person name="Bork P."/>
            <person name="Suyama M."/>
            <person name="Bailey J.A."/>
            <person name="Portnoy M.E."/>
            <person name="Torrents D."/>
            <person name="Chinwalla A.T."/>
            <person name="Gish W.R."/>
            <person name="Eddy S.R."/>
            <person name="McPherson J.D."/>
            <person name="Olson M.V."/>
            <person name="Eichler E.E."/>
            <person name="Green E.D."/>
            <person name="Waterston R.H."/>
            <person name="Wilson R.K."/>
        </authorList>
    </citation>
    <scope>NUCLEOTIDE SEQUENCE [LARGE SCALE GENOMIC DNA]</scope>
</reference>
<reference key="6">
    <citation type="journal article" date="2004" name="Genome Res.">
        <title>The status, quality, and expansion of the NIH full-length cDNA project: the Mammalian Gene Collection (MGC).</title>
        <authorList>
            <consortium name="The MGC Project Team"/>
        </authorList>
    </citation>
    <scope>NUCLEOTIDE SEQUENCE [LARGE SCALE MRNA] (ISOFORM 1)</scope>
    <source>
        <tissue>Bone marrow</tissue>
    </source>
</reference>
<reference key="7">
    <citation type="journal article" date="2004" name="Protein Sci.">
        <title>Signal peptide prediction based on analysis of experimentally verified cleavage sites.</title>
        <authorList>
            <person name="Zhang Z."/>
            <person name="Henzel W.J."/>
        </authorList>
    </citation>
    <scope>PROTEIN SEQUENCE OF 24-38</scope>
</reference>
<reference key="8">
    <citation type="journal article" date="2007" name="BMC Genomics">
        <title>The full-ORF clone resource of the German cDNA consortium.</title>
        <authorList>
            <person name="Bechtel S."/>
            <person name="Rosenfelder H."/>
            <person name="Duda A."/>
            <person name="Schmidt C.P."/>
            <person name="Ernst U."/>
            <person name="Wellenreuther R."/>
            <person name="Mehrle A."/>
            <person name="Schuster C."/>
            <person name="Bahr A."/>
            <person name="Bloecker H."/>
            <person name="Heubner D."/>
            <person name="Hoerlein A."/>
            <person name="Michel G."/>
            <person name="Wedler H."/>
            <person name="Koehrer K."/>
            <person name="Ottenwaelder B."/>
            <person name="Poustka A."/>
            <person name="Wiemann S."/>
            <person name="Schupp I."/>
        </authorList>
    </citation>
    <scope>NUCLEOTIDE SEQUENCE [LARGE SCALE MRNA] OF 74-206 (ISOFORM 1)</scope>
    <source>
        <tissue>Brain</tissue>
    </source>
</reference>
<reference key="9">
    <citation type="journal article" date="2004" name="Biochem. Biophys. Res. Commun.">
        <title>USAG-1: a bone morphogenetic protein antagonist abundantly expressed in the kidney.</title>
        <authorList>
            <person name="Yanagita M."/>
            <person name="Oka M."/>
            <person name="Watabe T."/>
            <person name="Iguchi H."/>
            <person name="Niida A."/>
            <person name="Takahashi S."/>
            <person name="Akiyama T."/>
            <person name="Miyazono K."/>
            <person name="Yanagisawa M."/>
            <person name="Sakurai T."/>
        </authorList>
    </citation>
    <scope>FUNCTION</scope>
    <scope>INTERACTION WITH BMP2; BMP4 AND BMP7</scope>
    <scope>SUBCELLULAR LOCATION</scope>
    <scope>TISSUE SPECIFICITY</scope>
</reference>
<feature type="signal peptide" evidence="6">
    <location>
        <begin position="1"/>
        <end position="23"/>
    </location>
</feature>
<feature type="chain" id="PRO_0000033180" description="Sclerostin domain-containing protein 1">
    <location>
        <begin position="24"/>
        <end position="206"/>
    </location>
</feature>
<feature type="domain" description="CTCK" evidence="3">
    <location>
        <begin position="75"/>
        <end position="170"/>
    </location>
</feature>
<feature type="region of interest" description="Disordered" evidence="4">
    <location>
        <begin position="174"/>
        <end position="206"/>
    </location>
</feature>
<feature type="compositionally biased region" description="Basic residues" evidence="4">
    <location>
        <begin position="188"/>
        <end position="206"/>
    </location>
</feature>
<feature type="glycosylation site" description="N-linked (GlcNAc...) asparagine" evidence="2">
    <location>
        <position position="47"/>
    </location>
</feature>
<feature type="glycosylation site" description="N-linked (GlcNAc...) asparagine" evidence="2">
    <location>
        <position position="173"/>
    </location>
</feature>
<feature type="disulfide bond" evidence="3">
    <location>
        <begin position="75"/>
        <end position="133"/>
    </location>
</feature>
<feature type="disulfide bond" evidence="3">
    <location>
        <begin position="89"/>
        <end position="147"/>
    </location>
</feature>
<feature type="disulfide bond" evidence="3">
    <location>
        <begin position="100"/>
        <end position="163"/>
    </location>
</feature>
<feature type="disulfide bond" evidence="3">
    <location>
        <begin position="104"/>
        <end position="165"/>
    </location>
</feature>
<feature type="splice variant" id="VSP_054240" description="In isoform 2." evidence="7">
    <original>NT</original>
    <variation>NRTESLTRQNYFWLFPGAFLRQLQEA</variation>
    <location>
        <begin position="68"/>
        <end position="69"/>
    </location>
</feature>
<feature type="sequence variant" id="VAR_053682" description="In dbSNP:rs34016012.">
    <original>Q</original>
    <variation>H</variation>
    <location>
        <position position="189"/>
    </location>
</feature>
<feature type="sequence conflict" description="In Ref. 3; AAQ83296." evidence="8" ref="3">
    <original>FYLLPLA</original>
    <variation>LSLIPLL</variation>
    <location>
        <begin position="8"/>
        <end position="14"/>
    </location>
</feature>
<feature type="sequence conflict" description="In Ref. 3; AAQ83296." evidence="8" ref="3">
    <original>S</original>
    <variation>N</variation>
    <location>
        <position position="20"/>
    </location>
</feature>
<feature type="sequence conflict" description="In Ref. 3; AAQ83296." evidence="8" ref="3">
    <original>P</original>
    <variation>S</variation>
    <location>
        <position position="41"/>
    </location>
</feature>
<feature type="sequence conflict" description="In Ref. 3; AAQ83296." evidence="8" ref="3">
    <original>N</original>
    <variation>S</variation>
    <location>
        <position position="62"/>
    </location>
</feature>
<feature type="sequence conflict" description="In Ref. 3; AAQ83296." evidence="8" ref="3">
    <original>T</original>
    <variation>S</variation>
    <location>
        <position position="69"/>
    </location>
</feature>
<feature type="sequence conflict" description="In Ref. 8; CAB43243." evidence="8" ref="8">
    <original>P</original>
    <variation>L</variation>
    <location>
        <position position="106"/>
    </location>
</feature>
<feature type="sequence conflict" description="In Ref. 3; AAQ83296." evidence="8" ref="3">
    <original>S</original>
    <variation>G</variation>
    <location>
        <position position="127"/>
    </location>
</feature>
<feature type="sequence conflict" description="In Ref. 3; AAQ83296." evidence="8" ref="3">
    <original>M</original>
    <variation>V</variation>
    <location>
        <position position="182"/>
    </location>
</feature>
<feature type="sequence conflict" description="In Ref. 3; AAQ83296." evidence="8" ref="3">
    <original>V</original>
    <variation>A</variation>
    <location>
        <position position="188"/>
    </location>
</feature>
<feature type="sequence conflict" description="In Ref. 3; AAQ83296." evidence="8" ref="3">
    <original>M</original>
    <variation>L</variation>
    <location>
        <position position="205"/>
    </location>
</feature>
<proteinExistence type="evidence at protein level"/>
<accession>Q6X4U4</accession>
<accession>A8MUA6</accession>
<accession>Q96HJ7</accession>
<accession>Q9Y3U3</accession>
<protein>
    <recommendedName>
        <fullName>Sclerostin domain-containing protein 1</fullName>
    </recommendedName>
    <alternativeName>
        <fullName>Ectodermal BMP inhibitor</fullName>
        <shortName>Ectodin</shortName>
    </alternativeName>
    <alternativeName>
        <fullName>Uterine sensitization-associated gene 1 protein</fullName>
        <shortName>USAG-1</shortName>
    </alternativeName>
</protein>
<evidence type="ECO:0000250" key="1"/>
<evidence type="ECO:0000255" key="2"/>
<evidence type="ECO:0000255" key="3">
    <source>
        <dbReference type="PROSITE-ProRule" id="PRU00039"/>
    </source>
</evidence>
<evidence type="ECO:0000256" key="4">
    <source>
        <dbReference type="SAM" id="MobiDB-lite"/>
    </source>
</evidence>
<evidence type="ECO:0000269" key="5">
    <source>
    </source>
</evidence>
<evidence type="ECO:0000269" key="6">
    <source>
    </source>
</evidence>
<evidence type="ECO:0000303" key="7">
    <source>
    </source>
</evidence>
<evidence type="ECO:0000305" key="8"/>
<organism>
    <name type="scientific">Homo sapiens</name>
    <name type="common">Human</name>
    <dbReference type="NCBI Taxonomy" id="9606"/>
    <lineage>
        <taxon>Eukaryota</taxon>
        <taxon>Metazoa</taxon>
        <taxon>Chordata</taxon>
        <taxon>Craniata</taxon>
        <taxon>Vertebrata</taxon>
        <taxon>Euteleostomi</taxon>
        <taxon>Mammalia</taxon>
        <taxon>Eutheria</taxon>
        <taxon>Euarchontoglires</taxon>
        <taxon>Primates</taxon>
        <taxon>Haplorrhini</taxon>
        <taxon>Catarrhini</taxon>
        <taxon>Hominidae</taxon>
        <taxon>Homo</taxon>
    </lineage>
</organism>
<keyword id="KW-0025">Alternative splicing</keyword>
<keyword id="KW-0903">Direct protein sequencing</keyword>
<keyword id="KW-1015">Disulfide bond</keyword>
<keyword id="KW-0325">Glycoprotein</keyword>
<keyword id="KW-1267">Proteomics identification</keyword>
<keyword id="KW-1185">Reference proteome</keyword>
<keyword id="KW-0964">Secreted</keyword>
<keyword id="KW-0732">Signal</keyword>
<keyword id="KW-0879">Wnt signaling pathway</keyword>
<name>SOSD1_HUMAN</name>
<dbReference type="EMBL" id="AB059270">
    <property type="protein sequence ID" value="BAC20331.1"/>
    <property type="molecule type" value="mRNA"/>
</dbReference>
<dbReference type="EMBL" id="AF361494">
    <property type="protein sequence ID" value="AAL57219.1"/>
    <property type="molecule type" value="mRNA"/>
</dbReference>
<dbReference type="EMBL" id="AY255634">
    <property type="protein sequence ID" value="AAQ83296.1"/>
    <property type="molecule type" value="mRNA"/>
</dbReference>
<dbReference type="EMBL" id="AK093408">
    <property type="protein sequence ID" value="BAG52710.1"/>
    <property type="molecule type" value="mRNA"/>
</dbReference>
<dbReference type="EMBL" id="AC005014">
    <property type="status" value="NOT_ANNOTATED_CDS"/>
    <property type="molecule type" value="Genomic_DNA"/>
</dbReference>
<dbReference type="EMBL" id="AC079155">
    <property type="protein sequence ID" value="AAQ96855.1"/>
    <property type="molecule type" value="Genomic_DNA"/>
</dbReference>
<dbReference type="EMBL" id="BC008484">
    <property type="protein sequence ID" value="AAH08484.1"/>
    <property type="molecule type" value="mRNA"/>
</dbReference>
<dbReference type="EMBL" id="AL050024">
    <property type="protein sequence ID" value="CAB43243.2"/>
    <property type="molecule type" value="mRNA"/>
</dbReference>
<dbReference type="CCDS" id="CCDS5360.1">
    <molecule id="Q6X4U4-1"/>
</dbReference>
<dbReference type="PIR" id="T08710">
    <property type="entry name" value="T08710"/>
</dbReference>
<dbReference type="RefSeq" id="NP_056279.1">
    <molecule id="Q6X4U4-1"/>
    <property type="nucleotide sequence ID" value="NM_015464.3"/>
</dbReference>
<dbReference type="RefSeq" id="XP_016867432.1">
    <property type="nucleotide sequence ID" value="XM_017011943.1"/>
</dbReference>
<dbReference type="SMR" id="Q6X4U4"/>
<dbReference type="BioGRID" id="117428">
    <property type="interactions" value="27"/>
</dbReference>
<dbReference type="FunCoup" id="Q6X4U4">
    <property type="interactions" value="186"/>
</dbReference>
<dbReference type="STRING" id="9606.ENSP00000304930"/>
<dbReference type="GlyConnect" id="2944">
    <property type="glycosylation" value="6 N-Linked glycans (1 site)"/>
</dbReference>
<dbReference type="GlyCosmos" id="Q6X4U4">
    <property type="glycosylation" value="2 sites, 9 glycans"/>
</dbReference>
<dbReference type="GlyGen" id="Q6X4U4">
    <property type="glycosylation" value="2 sites, 9 N-linked glycans (1 site)"/>
</dbReference>
<dbReference type="iPTMnet" id="Q6X4U4"/>
<dbReference type="PhosphoSitePlus" id="Q6X4U4"/>
<dbReference type="BioMuta" id="SOSTDC1"/>
<dbReference type="DMDM" id="62287504"/>
<dbReference type="jPOST" id="Q6X4U4"/>
<dbReference type="MassIVE" id="Q6X4U4"/>
<dbReference type="PaxDb" id="9606-ENSP00000304930"/>
<dbReference type="PeptideAtlas" id="Q6X4U4"/>
<dbReference type="ProteomicsDB" id="2091"/>
<dbReference type="ProteomicsDB" id="67782">
    <molecule id="Q6X4U4-1"/>
</dbReference>
<dbReference type="Antibodypedia" id="56432">
    <property type="antibodies" value="161 antibodies from 20 providers"/>
</dbReference>
<dbReference type="DNASU" id="25928"/>
<dbReference type="Ensembl" id="ENST00000307068.5">
    <molecule id="Q6X4U4-1"/>
    <property type="protein sequence ID" value="ENSP00000304930.4"/>
    <property type="gene ID" value="ENSG00000171243.8"/>
</dbReference>
<dbReference type="Ensembl" id="ENST00000396652.1">
    <molecule id="Q6X4U4-2"/>
    <property type="protein sequence ID" value="ENSP00000379889.1"/>
    <property type="gene ID" value="ENSG00000171243.8"/>
</dbReference>
<dbReference type="GeneID" id="25928"/>
<dbReference type="KEGG" id="hsa:25928"/>
<dbReference type="MANE-Select" id="ENST00000307068.5">
    <property type="protein sequence ID" value="ENSP00000304930.4"/>
    <property type="RefSeq nucleotide sequence ID" value="NM_015464.3"/>
    <property type="RefSeq protein sequence ID" value="NP_056279.1"/>
</dbReference>
<dbReference type="UCSC" id="uc003stg.4">
    <molecule id="Q6X4U4-1"/>
    <property type="organism name" value="human"/>
</dbReference>
<dbReference type="AGR" id="HGNC:21748"/>
<dbReference type="CTD" id="25928"/>
<dbReference type="DisGeNET" id="25928"/>
<dbReference type="GeneCards" id="SOSTDC1"/>
<dbReference type="HGNC" id="HGNC:21748">
    <property type="gene designation" value="SOSTDC1"/>
</dbReference>
<dbReference type="HPA" id="ENSG00000171243">
    <property type="expression patterns" value="Tissue enriched (choroid)"/>
</dbReference>
<dbReference type="MIM" id="609675">
    <property type="type" value="gene"/>
</dbReference>
<dbReference type="neXtProt" id="NX_Q6X4U4"/>
<dbReference type="OpenTargets" id="ENSG00000171243"/>
<dbReference type="PharmGKB" id="PA134937603"/>
<dbReference type="VEuPathDB" id="HostDB:ENSG00000171243"/>
<dbReference type="eggNOG" id="ENOG502QV5G">
    <property type="taxonomic scope" value="Eukaryota"/>
</dbReference>
<dbReference type="GeneTree" id="ENSGT00390000014900"/>
<dbReference type="HOGENOM" id="CLU_087969_0_0_1"/>
<dbReference type="InParanoid" id="Q6X4U4"/>
<dbReference type="OMA" id="ACIFTKS"/>
<dbReference type="OrthoDB" id="6624188at2759"/>
<dbReference type="PAN-GO" id="Q6X4U4">
    <property type="GO annotations" value="4 GO annotations based on evolutionary models"/>
</dbReference>
<dbReference type="PhylomeDB" id="Q6X4U4"/>
<dbReference type="TreeFam" id="TF353019"/>
<dbReference type="PathwayCommons" id="Q6X4U4"/>
<dbReference type="SignaLink" id="Q6X4U4"/>
<dbReference type="SIGNOR" id="Q6X4U4"/>
<dbReference type="BioGRID-ORCS" id="25928">
    <property type="hits" value="13 hits in 1143 CRISPR screens"/>
</dbReference>
<dbReference type="GeneWiki" id="SOSTDC1"/>
<dbReference type="GenomeRNAi" id="25928"/>
<dbReference type="Pharos" id="Q6X4U4">
    <property type="development level" value="Tbio"/>
</dbReference>
<dbReference type="PRO" id="PR:Q6X4U4"/>
<dbReference type="Proteomes" id="UP000005640">
    <property type="component" value="Chromosome 7"/>
</dbReference>
<dbReference type="RNAct" id="Q6X4U4">
    <property type="molecule type" value="protein"/>
</dbReference>
<dbReference type="Bgee" id="ENSG00000171243">
    <property type="expression patterns" value="Expressed in pigmented layer of retina and 145 other cell types or tissues"/>
</dbReference>
<dbReference type="ExpressionAtlas" id="Q6X4U4">
    <property type="expression patterns" value="baseline and differential"/>
</dbReference>
<dbReference type="GO" id="GO:0005615">
    <property type="term" value="C:extracellular space"/>
    <property type="evidence" value="ECO:0000314"/>
    <property type="project" value="UniProtKB"/>
</dbReference>
<dbReference type="GO" id="GO:0036122">
    <property type="term" value="F:BMP binding"/>
    <property type="evidence" value="ECO:0000314"/>
    <property type="project" value="UniProtKB"/>
</dbReference>
<dbReference type="GO" id="GO:0098821">
    <property type="term" value="F:BMP receptor activity"/>
    <property type="evidence" value="ECO:0000314"/>
    <property type="project" value="UniProtKB"/>
</dbReference>
<dbReference type="GO" id="GO:0060070">
    <property type="term" value="P:canonical Wnt signaling pathway"/>
    <property type="evidence" value="ECO:0007669"/>
    <property type="project" value="Ensembl"/>
</dbReference>
<dbReference type="GO" id="GO:0072148">
    <property type="term" value="P:epithelial cell fate commitment"/>
    <property type="evidence" value="ECO:0007669"/>
    <property type="project" value="Ensembl"/>
</dbReference>
<dbReference type="GO" id="GO:0031069">
    <property type="term" value="P:hair follicle morphogenesis"/>
    <property type="evidence" value="ECO:0007669"/>
    <property type="project" value="Ensembl"/>
</dbReference>
<dbReference type="GO" id="GO:0060648">
    <property type="term" value="P:mammary gland bud morphogenesis"/>
    <property type="evidence" value="ECO:0007669"/>
    <property type="project" value="Ensembl"/>
</dbReference>
<dbReference type="GO" id="GO:0030514">
    <property type="term" value="P:negative regulation of BMP signaling pathway"/>
    <property type="evidence" value="ECO:0000314"/>
    <property type="project" value="UniProtKB"/>
</dbReference>
<dbReference type="GO" id="GO:0090090">
    <property type="term" value="P:negative regulation of canonical Wnt signaling pathway"/>
    <property type="evidence" value="ECO:0007669"/>
    <property type="project" value="Ensembl"/>
</dbReference>
<dbReference type="GO" id="GO:0010454">
    <property type="term" value="P:negative regulation of cell fate commitment"/>
    <property type="evidence" value="ECO:0007669"/>
    <property type="project" value="Ensembl"/>
</dbReference>
<dbReference type="GO" id="GO:2000016">
    <property type="term" value="P:negative regulation of determination of dorsal identity"/>
    <property type="evidence" value="ECO:0000314"/>
    <property type="project" value="UniProtKB"/>
</dbReference>
<dbReference type="GO" id="GO:0045662">
    <property type="term" value="P:negative regulation of myoblast differentiation"/>
    <property type="evidence" value="ECO:0000314"/>
    <property type="project" value="UniProtKB"/>
</dbReference>
<dbReference type="GO" id="GO:0030178">
    <property type="term" value="P:negative regulation of Wnt signaling pathway"/>
    <property type="evidence" value="ECO:0000314"/>
    <property type="project" value="UniProtKB"/>
</dbReference>
<dbReference type="GO" id="GO:0042475">
    <property type="term" value="P:odontogenesis of dentin-containing tooth"/>
    <property type="evidence" value="ECO:0007669"/>
    <property type="project" value="Ensembl"/>
</dbReference>
<dbReference type="GO" id="GO:0007389">
    <property type="term" value="P:pattern specification process"/>
    <property type="evidence" value="ECO:0007669"/>
    <property type="project" value="Ensembl"/>
</dbReference>
<dbReference type="FunFam" id="2.10.90.10:FF:000019">
    <property type="entry name" value="Sclerostin domain-containing protein 1"/>
    <property type="match status" value="1"/>
</dbReference>
<dbReference type="Gene3D" id="2.10.90.10">
    <property type="entry name" value="Cystine-knot cytokines"/>
    <property type="match status" value="1"/>
</dbReference>
<dbReference type="InterPro" id="IPR006207">
    <property type="entry name" value="Cys_knot_C"/>
</dbReference>
<dbReference type="InterPro" id="IPR029034">
    <property type="entry name" value="Cystine-knot_cytokine"/>
</dbReference>
<dbReference type="InterPro" id="IPR008835">
    <property type="entry name" value="Sclerostin/SOSTDC1"/>
</dbReference>
<dbReference type="PANTHER" id="PTHR14903:SF5">
    <property type="entry name" value="SCLEROSTIN DOMAIN-CONTAINING PROTEIN 1"/>
    <property type="match status" value="1"/>
</dbReference>
<dbReference type="PANTHER" id="PTHR14903">
    <property type="entry name" value="SCLEROSTIN-RELATED"/>
    <property type="match status" value="1"/>
</dbReference>
<dbReference type="Pfam" id="PF05463">
    <property type="entry name" value="Sclerostin"/>
    <property type="match status" value="1"/>
</dbReference>
<dbReference type="PROSITE" id="PS01225">
    <property type="entry name" value="CTCK_2"/>
    <property type="match status" value="1"/>
</dbReference>
<comment type="function">
    <text evidence="1 5">May be involved in the onset of endometrial receptivity for implantation/sensitization for the decidual cell reaction Enhances Wnt signaling and inhibits TGF-beta signaling (By similarity). Directly antagonizes activity of BMP2, BMP4, BMP6 and BMP7 in a dose-dependent manner.</text>
</comment>
<comment type="subunit">
    <text evidence="5">Interacts with BMP2, BMP4, BMP6 and BMP7 with high affinity.</text>
</comment>
<comment type="subcellular location">
    <subcellularLocation>
        <location evidence="5">Secreted</location>
    </subcellularLocation>
</comment>
<comment type="alternative products">
    <event type="alternative splicing"/>
    <isoform>
        <id>Q6X4U4-1</id>
        <name>1</name>
        <sequence type="displayed"/>
    </isoform>
    <isoform>
        <id>Q6X4U4-2</id>
        <name>2</name>
        <sequence type="described" ref="VSP_054240"/>
    </isoform>
</comment>
<comment type="tissue specificity">
    <text evidence="5">Highly expressed in kidney and weakly in lung.</text>
</comment>
<comment type="similarity">
    <text evidence="8">Belongs to the sclerostin family.</text>
</comment>